<feature type="chain" id="PRO_0000192642" description="Chlorosome protein C">
    <location>
        <begin position="1"/>
        <end position="139"/>
    </location>
</feature>
<sequence>MSESYQKLRKDFKELDFTDRLTFLAESLLLTGQSAIVGGLEVAGRVVETVTGTVGSLIDASGITNILGGSGGVVGETIDRVAITVKDVSRSAGELYNDAVRNVENATSNAAKAVGDVGVSASEAVKNIAGSFQKTTGNK</sequence>
<dbReference type="EMBL" id="U09866">
    <property type="protein sequence ID" value="AAA18791.1"/>
    <property type="molecule type" value="Unassigned_DNA"/>
</dbReference>
<dbReference type="EMBL" id="AE006470">
    <property type="protein sequence ID" value="AAM73162.1"/>
    <property type="molecule type" value="Genomic_DNA"/>
</dbReference>
<dbReference type="RefSeq" id="NP_662820.1">
    <property type="nucleotide sequence ID" value="NC_002932.3"/>
</dbReference>
<dbReference type="RefSeq" id="WP_010933600.1">
    <property type="nucleotide sequence ID" value="NC_002932.3"/>
</dbReference>
<dbReference type="STRING" id="194439.CT1943"/>
<dbReference type="EnsemblBacteria" id="AAM73162">
    <property type="protein sequence ID" value="AAM73162"/>
    <property type="gene ID" value="CT1943"/>
</dbReference>
<dbReference type="KEGG" id="cte:CT1943"/>
<dbReference type="PATRIC" id="fig|194439.7.peg.1761"/>
<dbReference type="eggNOG" id="ENOG5032TX8">
    <property type="taxonomic scope" value="Bacteria"/>
</dbReference>
<dbReference type="HOGENOM" id="CLU_1843344_0_0_10"/>
<dbReference type="OrthoDB" id="597903at2"/>
<dbReference type="Proteomes" id="UP000001007">
    <property type="component" value="Chromosome"/>
</dbReference>
<dbReference type="GO" id="GO:0046858">
    <property type="term" value="C:chlorosome"/>
    <property type="evidence" value="ECO:0007669"/>
    <property type="project" value="UniProtKB-SubCell"/>
</dbReference>
<dbReference type="GO" id="GO:0042314">
    <property type="term" value="F:bacteriochlorophyll binding"/>
    <property type="evidence" value="ECO:0007669"/>
    <property type="project" value="UniProtKB-KW"/>
</dbReference>
<dbReference type="GO" id="GO:0015979">
    <property type="term" value="P:photosynthesis"/>
    <property type="evidence" value="ECO:0007669"/>
    <property type="project" value="UniProtKB-KW"/>
</dbReference>
<dbReference type="InterPro" id="IPR020995">
    <property type="entry name" value="Chlorosome_envelope_CsmC"/>
</dbReference>
<dbReference type="Pfam" id="PF11098">
    <property type="entry name" value="Chlorosome_CsmC"/>
    <property type="match status" value="1"/>
</dbReference>
<organism>
    <name type="scientific">Chlorobaculum tepidum (strain ATCC 49652 / DSM 12025 / NBRC 103806 / TLS)</name>
    <name type="common">Chlorobium tepidum</name>
    <dbReference type="NCBI Taxonomy" id="194439"/>
    <lineage>
        <taxon>Bacteria</taxon>
        <taxon>Pseudomonadati</taxon>
        <taxon>Chlorobiota</taxon>
        <taxon>Chlorobiia</taxon>
        <taxon>Chlorobiales</taxon>
        <taxon>Chlorobiaceae</taxon>
        <taxon>Chlorobaculum</taxon>
    </lineage>
</organism>
<reference key="1">
    <citation type="journal article" date="1994" name="Photosyn. Res.">
        <title>Genes encoding two chlorosome components from the green sulfur bacteria Chlorobium vibrioforme strain 8327D and Chlorobium tepidum.</title>
        <authorList>
            <person name="Chung S."/>
            <person name="Frank G."/>
            <person name="Zuber H."/>
            <person name="Bryant D.A."/>
        </authorList>
    </citation>
    <scope>NUCLEOTIDE SEQUENCE [GENOMIC DNA]</scope>
</reference>
<reference key="2">
    <citation type="journal article" date="2002" name="Proc. Natl. Acad. Sci. U.S.A.">
        <title>The complete genome sequence of Chlorobium tepidum TLS, a photosynthetic, anaerobic, green-sulfur bacterium.</title>
        <authorList>
            <person name="Eisen J.A."/>
            <person name="Nelson K.E."/>
            <person name="Paulsen I.T."/>
            <person name="Heidelberg J.F."/>
            <person name="Wu M."/>
            <person name="Dodson R.J."/>
            <person name="DeBoy R.T."/>
            <person name="Gwinn M.L."/>
            <person name="Nelson W.C."/>
            <person name="Haft D.H."/>
            <person name="Hickey E.K."/>
            <person name="Peterson J.D."/>
            <person name="Durkin A.S."/>
            <person name="Kolonay J.F."/>
            <person name="Yang F."/>
            <person name="Holt I.E."/>
            <person name="Umayam L.A."/>
            <person name="Mason T.M."/>
            <person name="Brenner M."/>
            <person name="Shea T.P."/>
            <person name="Parksey D.S."/>
            <person name="Nierman W.C."/>
            <person name="Feldblyum T.V."/>
            <person name="Hansen C.L."/>
            <person name="Craven M.B."/>
            <person name="Radune D."/>
            <person name="Vamathevan J.J."/>
            <person name="Khouri H.M."/>
            <person name="White O."/>
            <person name="Gruber T.M."/>
            <person name="Ketchum K.A."/>
            <person name="Venter J.C."/>
            <person name="Tettelin H."/>
            <person name="Bryant D.A."/>
            <person name="Fraser C.M."/>
        </authorList>
    </citation>
    <scope>NUCLEOTIDE SEQUENCE [LARGE SCALE GENOMIC DNA]</scope>
    <source>
        <strain>ATCC 49652 / DSM 12025 / NBRC 103806 / TLS</strain>
    </source>
</reference>
<gene>
    <name type="primary">csmC</name>
    <name type="ordered locus">CT1943</name>
</gene>
<keyword id="KW-0076">Bacteriochlorophyll</keyword>
<keyword id="KW-0148">Chlorophyll</keyword>
<keyword id="KW-0151">Chlorosome</keyword>
<keyword id="KW-0157">Chromophore</keyword>
<keyword id="KW-0602">Photosynthesis</keyword>
<keyword id="KW-1185">Reference proteome</keyword>
<accession>Q46367</accession>
<proteinExistence type="predicted"/>
<protein>
    <recommendedName>
        <fullName>Chlorosome protein C</fullName>
    </recommendedName>
    <alternativeName>
        <fullName>14 kDa chlorosome protein</fullName>
    </alternativeName>
</protein>
<name>CSMC_CHLTE</name>
<comment type="subcellular location">
    <subcellularLocation>
        <location>Chlorosome</location>
    </subcellularLocation>
</comment>